<keyword id="KW-1064">Adaptive immunity</keyword>
<keyword id="KW-0094">Blood coagulation</keyword>
<keyword id="KW-0175">Coiled coil</keyword>
<keyword id="KW-0903">Direct protein sequencing</keyword>
<keyword id="KW-1015">Disulfide bond</keyword>
<keyword id="KW-0356">Hemostasis</keyword>
<keyword id="KW-0391">Immunity</keyword>
<keyword id="KW-0399">Innate immunity</keyword>
<keyword id="KW-0964">Secreted</keyword>
<feature type="peptide" id="PRO_0000009014" description="Fibrinopeptide A">
    <location>
        <begin position="1"/>
        <end position="19"/>
    </location>
</feature>
<feature type="non-terminal residue">
    <location>
        <position position="19"/>
    </location>
</feature>
<protein>
    <recommendedName>
        <fullName>Fibrinogen alpha chain</fullName>
    </recommendedName>
    <component>
        <recommendedName>
            <fullName>Fibrinopeptide A</fullName>
        </recommendedName>
    </component>
</protein>
<gene>
    <name type="primary">FGA</name>
</gene>
<comment type="function">
    <text evidence="1">Cleaved by the protease thrombin to yield monomers which, together with fibrinogen beta (FGB) and fibrinogen gamma (FGG), polymerize to form an insoluble fibrin matrix. Fibrin has a major function in hemostasis as one of the primary components of blood clots. In addition, functions during the early stages of wound repair to stabilize the lesion and guide cell migration during re-epithelialization. Was originally thought to be essential for platelet aggregation, based on in vitro studies using anticoagulated blood. However, subsequent studies have shown that it is not absolutely required for thrombus formation in vivo. Enhances expression of SELP in activated platelets via an ITGB3-dependent pathway. Maternal fibrinogen is essential for successful pregnancy. Fibrin deposition is also associated with infection, where it protects against IFNG-mediated hemorrhage. May also facilitate the immune response via both innate and T-cell mediated pathways.</text>
</comment>
<comment type="subunit">
    <text evidence="2">Heterohexamer; disulfide linked. Contains 2 sets of 3 non-identical chains (alpha, beta and gamma). The 2 heterotrimers are in head to head conformation with the N-termini in a small central domain (By similarity).</text>
</comment>
<comment type="subcellular location">
    <subcellularLocation>
        <location>Secreted</location>
    </subcellularLocation>
</comment>
<comment type="domain">
    <text evidence="2">A long coiled coil structure formed by 3 polypeptide chains connects the central nodule to the C-terminal domains (distal nodules). The long C-terminal ends of the alpha chains fold back, contributing a fourth strand to the coiled coil structure.</text>
</comment>
<comment type="PTM">
    <text>Conversion of fibrinogen to fibrin is triggered by thrombin, which cleaves fibrinopeptides A and B from alpha and beta chains, and thus exposes the N-terminal polymerization sites responsible for the formation of the soft clot. The soft clot is converted into the hard clot by factor XIIIA which catalyzes the epsilon-(gamma-glutamyl)lysine cross-linking between gamma chains (stronger) and between alpha chains (weaker) of different monomers.</text>
</comment>
<comment type="PTM">
    <text>Forms F13A-mediated cross-links between a glutamine and the epsilon-amino group of a lysine residue, forming fibronectin-fibrinogen heteropolymers.</text>
</comment>
<accession>P68217</accession>
<accession>P14446</accession>
<reference key="1">
    <citation type="journal article" date="1967" name="Arch. Biochem. Biophys.">
        <title>Amino acid sequence studies on artiodacty fibrinopeptides.</title>
        <authorList>
            <person name="Mross G.A."/>
            <person name="Doolittle R.F."/>
        </authorList>
    </citation>
    <scope>PROTEIN SEQUENCE</scope>
</reference>
<organism>
    <name type="scientific">Cervus elaphus nelsoni</name>
    <name type="common">Rocky Mountain elk</name>
    <name type="synonym">Cervus canadensis nelsoni</name>
    <dbReference type="NCBI Taxonomy" id="9864"/>
    <lineage>
        <taxon>Eukaryota</taxon>
        <taxon>Metazoa</taxon>
        <taxon>Chordata</taxon>
        <taxon>Craniata</taxon>
        <taxon>Vertebrata</taxon>
        <taxon>Euteleostomi</taxon>
        <taxon>Mammalia</taxon>
        <taxon>Eutheria</taxon>
        <taxon>Laurasiatheria</taxon>
        <taxon>Artiodactyla</taxon>
        <taxon>Ruminantia</taxon>
        <taxon>Pecora</taxon>
        <taxon>Cervidae</taxon>
        <taxon>Cervinae</taxon>
        <taxon>Cervus</taxon>
    </lineage>
</organism>
<evidence type="ECO:0000250" key="1">
    <source>
        <dbReference type="UniProtKB" id="E9PV24"/>
    </source>
</evidence>
<evidence type="ECO:0000250" key="2">
    <source>
        <dbReference type="UniProtKB" id="P02671"/>
    </source>
</evidence>
<dbReference type="GO" id="GO:0005576">
    <property type="term" value="C:extracellular region"/>
    <property type="evidence" value="ECO:0007669"/>
    <property type="project" value="UniProtKB-SubCell"/>
</dbReference>
<dbReference type="GO" id="GO:0002250">
    <property type="term" value="P:adaptive immune response"/>
    <property type="evidence" value="ECO:0007669"/>
    <property type="project" value="UniProtKB-KW"/>
</dbReference>
<dbReference type="GO" id="GO:0007596">
    <property type="term" value="P:blood coagulation"/>
    <property type="evidence" value="ECO:0007669"/>
    <property type="project" value="UniProtKB-KW"/>
</dbReference>
<dbReference type="GO" id="GO:0045087">
    <property type="term" value="P:innate immune response"/>
    <property type="evidence" value="ECO:0007669"/>
    <property type="project" value="UniProtKB-KW"/>
</dbReference>
<name>FIBA_CEREN</name>
<sequence>ADGSDPASSDFLAEGGGVR</sequence>
<proteinExistence type="evidence at protein level"/>